<keyword id="KW-0966">Cell projection</keyword>
<keyword id="KW-0969">Cilium</keyword>
<keyword id="KW-0175">Coiled coil</keyword>
<keyword id="KW-0963">Cytoplasm</keyword>
<keyword id="KW-0433">Leucine-rich repeat</keyword>
<keyword id="KW-1185">Reference proteome</keyword>
<keyword id="KW-0677">Repeat</keyword>
<dbReference type="EMBL" id="AB179316">
    <property type="protein sequence ID" value="BAE02367.1"/>
    <property type="molecule type" value="mRNA"/>
</dbReference>
<dbReference type="SMR" id="Q4R3F0"/>
<dbReference type="STRING" id="9541.ENSMFAP00000009836"/>
<dbReference type="eggNOG" id="KOG0531">
    <property type="taxonomic scope" value="Eukaryota"/>
</dbReference>
<dbReference type="Proteomes" id="UP000233100">
    <property type="component" value="Unplaced"/>
</dbReference>
<dbReference type="GO" id="GO:0005929">
    <property type="term" value="C:cilium"/>
    <property type="evidence" value="ECO:0007669"/>
    <property type="project" value="UniProtKB-SubCell"/>
</dbReference>
<dbReference type="GO" id="GO:0005737">
    <property type="term" value="C:cytoplasm"/>
    <property type="evidence" value="ECO:0007669"/>
    <property type="project" value="UniProtKB-SubCell"/>
</dbReference>
<dbReference type="GO" id="GO:0036158">
    <property type="term" value="P:outer dynein arm assembly"/>
    <property type="evidence" value="ECO:0007669"/>
    <property type="project" value="TreeGrafter"/>
</dbReference>
<dbReference type="FunFam" id="3.80.10.10:FF:000052">
    <property type="entry name" value="Leucine rich repeat containing 6"/>
    <property type="match status" value="1"/>
</dbReference>
<dbReference type="Gene3D" id="3.80.10.10">
    <property type="entry name" value="Ribonuclease Inhibitor"/>
    <property type="match status" value="1"/>
</dbReference>
<dbReference type="InterPro" id="IPR056496">
    <property type="entry name" value="CS_DNAAF11_C"/>
</dbReference>
<dbReference type="InterPro" id="IPR007052">
    <property type="entry name" value="CS_dom"/>
</dbReference>
<dbReference type="InterPro" id="IPR001611">
    <property type="entry name" value="Leu-rich_rpt"/>
</dbReference>
<dbReference type="InterPro" id="IPR032675">
    <property type="entry name" value="LRR_dom_sf"/>
</dbReference>
<dbReference type="InterPro" id="IPR003603">
    <property type="entry name" value="U2A'_phosphoprotein32A_C"/>
</dbReference>
<dbReference type="PANTHER" id="PTHR18849:SF0">
    <property type="entry name" value="CILIA- AND FLAGELLA-ASSOCIATED PROTEIN 410-RELATED"/>
    <property type="match status" value="1"/>
</dbReference>
<dbReference type="PANTHER" id="PTHR18849">
    <property type="entry name" value="LEUCINE RICH REPEAT PROTEIN"/>
    <property type="match status" value="1"/>
</dbReference>
<dbReference type="Pfam" id="PF23602">
    <property type="entry name" value="CS_DNAAF11_C"/>
    <property type="match status" value="1"/>
</dbReference>
<dbReference type="Pfam" id="PF14580">
    <property type="entry name" value="LRR_9"/>
    <property type="match status" value="1"/>
</dbReference>
<dbReference type="SMART" id="SM00365">
    <property type="entry name" value="LRR_SD22"/>
    <property type="match status" value="2"/>
</dbReference>
<dbReference type="SMART" id="SM00446">
    <property type="entry name" value="LRRcap"/>
    <property type="match status" value="1"/>
</dbReference>
<dbReference type="SUPFAM" id="SSF52058">
    <property type="entry name" value="L domain-like"/>
    <property type="match status" value="1"/>
</dbReference>
<dbReference type="PROSITE" id="PS51203">
    <property type="entry name" value="CS"/>
    <property type="match status" value="1"/>
</dbReference>
<dbReference type="PROSITE" id="PS51450">
    <property type="entry name" value="LRR"/>
    <property type="match status" value="4"/>
</dbReference>
<gene>
    <name type="primary">LRCC6</name>
    <name type="ORF">QtsA-17365</name>
</gene>
<name>TILB_MACFA</name>
<proteinExistence type="evidence at transcript level"/>
<comment type="function">
    <text evidence="1">May play a role in dynein arm assembly, hence essential for proper axoneme building for cilia motility.</text>
</comment>
<comment type="subunit">
    <text evidence="2">Interacts (via CS domain) with ZMYND10 (via C-terminus).</text>
</comment>
<comment type="subcellular location">
    <subcellularLocation>
        <location evidence="1">Cytoplasm</location>
    </subcellularLocation>
    <subcellularLocation>
        <location evidence="1">Cell projection</location>
        <location evidence="1">Cilium</location>
    </subcellularLocation>
</comment>
<comment type="similarity">
    <text evidence="6">Belongs to the tilB family.</text>
</comment>
<feature type="chain" id="PRO_0000084497" description="Protein tilB homolog">
    <location>
        <begin position="1"/>
        <end position="466"/>
    </location>
</feature>
<feature type="repeat" description="LRR 1">
    <location>
        <begin position="22"/>
        <end position="43"/>
    </location>
</feature>
<feature type="repeat" description="LRR 2">
    <location>
        <begin position="45"/>
        <end position="66"/>
    </location>
</feature>
<feature type="repeat" description="LRR 3">
    <location>
        <begin position="67"/>
        <end position="88"/>
    </location>
</feature>
<feature type="repeat" description="LRR 4">
    <location>
        <begin position="89"/>
        <end position="110"/>
    </location>
</feature>
<feature type="domain" description="LRRCT">
    <location>
        <begin position="123"/>
        <end position="161"/>
    </location>
</feature>
<feature type="domain" description="CS" evidence="4">
    <location>
        <begin position="301"/>
        <end position="396"/>
    </location>
</feature>
<feature type="region of interest" description="Disordered" evidence="5">
    <location>
        <begin position="185"/>
        <end position="206"/>
    </location>
</feature>
<feature type="region of interest" description="Disordered" evidence="5">
    <location>
        <begin position="269"/>
        <end position="288"/>
    </location>
</feature>
<feature type="region of interest" description="Disordered" evidence="5">
    <location>
        <begin position="418"/>
        <end position="466"/>
    </location>
</feature>
<feature type="coiled-coil region" evidence="3">
    <location>
        <begin position="178"/>
        <end position="204"/>
    </location>
</feature>
<feature type="compositionally biased region" description="Basic and acidic residues" evidence="5">
    <location>
        <begin position="185"/>
        <end position="202"/>
    </location>
</feature>
<feature type="compositionally biased region" description="Basic and acidic residues" evidence="5">
    <location>
        <begin position="269"/>
        <end position="279"/>
    </location>
</feature>
<feature type="compositionally biased region" description="Acidic residues" evidence="5">
    <location>
        <begin position="450"/>
        <end position="460"/>
    </location>
</feature>
<sequence length="466" mass="54161">MGWITEDLIRRNAEHNDCVIFSLEELSLHQQEIERLEHIDKWCRDLKILYLQNNLIGKIENVSKLKKLEYLNLALNNIEKIENLEGCEELAKLDLTVNFIGELSSIKTLKHNIHLKELFLMGNPCAFFDHYREFVVATLPQLKWLDGKGIEPSERIKALQEYSIIEPQIREQEKDHCLKRAKLKEEAQRKHQEEDKNEDKRSNAGFDGRWYTDINATLSSLESKDHLQAPDTEEHNTKKLDNSEDDLEFWNKPCLFTPESRLETLRHMEKQRKNQEKLSERKKKVKPPRTLITEDGKALNVNEPKIDFSLKDNEKQIILDLAVYRYMDTSLINVDVQPTYVRVMIKGKPFQLVLPAEVKPDSSSAKRSQTTGHLVICMPKVGEVITGGQRAFTSVKTTSDRSREHINTRSKHMEKLEVDPSKHSFPDVTNIVQGKKHTPRRRPEPKIIPSEEDPTFEDNPEVPPLI</sequence>
<organism>
    <name type="scientific">Macaca fascicularis</name>
    <name type="common">Crab-eating macaque</name>
    <name type="synonym">Cynomolgus monkey</name>
    <dbReference type="NCBI Taxonomy" id="9541"/>
    <lineage>
        <taxon>Eukaryota</taxon>
        <taxon>Metazoa</taxon>
        <taxon>Chordata</taxon>
        <taxon>Craniata</taxon>
        <taxon>Vertebrata</taxon>
        <taxon>Euteleostomi</taxon>
        <taxon>Mammalia</taxon>
        <taxon>Eutheria</taxon>
        <taxon>Euarchontoglires</taxon>
        <taxon>Primates</taxon>
        <taxon>Haplorrhini</taxon>
        <taxon>Catarrhini</taxon>
        <taxon>Cercopithecidae</taxon>
        <taxon>Cercopithecinae</taxon>
        <taxon>Macaca</taxon>
    </lineage>
</organism>
<reference key="1">
    <citation type="submission" date="2005-05" db="EMBL/GenBank/DDBJ databases">
        <title>DNA sequences of macaque genes expressed in brain or testis and its evolutionary implications.</title>
        <authorList>
            <consortium name="International consortium for macaque cDNA sequencing and analysis"/>
        </authorList>
    </citation>
    <scope>NUCLEOTIDE SEQUENCE [LARGE SCALE MRNA]</scope>
    <source>
        <tissue>Testis</tissue>
    </source>
</reference>
<protein>
    <recommendedName>
        <fullName>Protein tilB homolog</fullName>
    </recommendedName>
    <alternativeName>
        <fullName>Leucine-rich repeat-containing protein 6</fullName>
    </alternativeName>
</protein>
<evidence type="ECO:0000250" key="1"/>
<evidence type="ECO:0000250" key="2">
    <source>
        <dbReference type="UniProtKB" id="Q86X45"/>
    </source>
</evidence>
<evidence type="ECO:0000255" key="3"/>
<evidence type="ECO:0000255" key="4">
    <source>
        <dbReference type="PROSITE-ProRule" id="PRU00547"/>
    </source>
</evidence>
<evidence type="ECO:0000256" key="5">
    <source>
        <dbReference type="SAM" id="MobiDB-lite"/>
    </source>
</evidence>
<evidence type="ECO:0000305" key="6"/>
<accession>Q4R3F0</accession>